<proteinExistence type="inferred from homology"/>
<reference key="1">
    <citation type="journal article" date="2003" name="Proc. Natl. Acad. Sci. U.S.A.">
        <title>Complete genome sequence of Lactobacillus plantarum WCFS1.</title>
        <authorList>
            <person name="Kleerebezem M."/>
            <person name="Boekhorst J."/>
            <person name="van Kranenburg R."/>
            <person name="Molenaar D."/>
            <person name="Kuipers O.P."/>
            <person name="Leer R."/>
            <person name="Tarchini R."/>
            <person name="Peters S.A."/>
            <person name="Sandbrink H.M."/>
            <person name="Fiers M.W.E.J."/>
            <person name="Stiekema W."/>
            <person name="Klein Lankhorst R.M."/>
            <person name="Bron P.A."/>
            <person name="Hoffer S.M."/>
            <person name="Nierop Groot M.N."/>
            <person name="Kerkhoven R."/>
            <person name="De Vries M."/>
            <person name="Ursing B."/>
            <person name="De Vos W.M."/>
            <person name="Siezen R.J."/>
        </authorList>
    </citation>
    <scope>NUCLEOTIDE SEQUENCE [LARGE SCALE GENOMIC DNA]</scope>
    <source>
        <strain>ATCC BAA-793 / NCIMB 8826 / WCFS1</strain>
    </source>
</reference>
<reference key="2">
    <citation type="journal article" date="2012" name="J. Bacteriol.">
        <title>Complete resequencing and reannotation of the Lactobacillus plantarum WCFS1 genome.</title>
        <authorList>
            <person name="Siezen R.J."/>
            <person name="Francke C."/>
            <person name="Renckens B."/>
            <person name="Boekhorst J."/>
            <person name="Wels M."/>
            <person name="Kleerebezem M."/>
            <person name="van Hijum S.A."/>
        </authorList>
    </citation>
    <scope>NUCLEOTIDE SEQUENCE [LARGE SCALE GENOMIC DNA]</scope>
    <scope>GENOME REANNOTATION</scope>
    <source>
        <strain>ATCC BAA-793 / NCIMB 8826 / WCFS1</strain>
    </source>
</reference>
<gene>
    <name evidence="1" type="primary">tilS</name>
    <name type="ordered locus">lp_0545</name>
</gene>
<sequence>MTPIQKFNRQLAAAKLLSPQQTVVVAVSTGVDSMVLLHLLQRLPAAERPRVVVAHVNHHLREQSQMEADYLRQYCQQQNLKLVMADWLPAAHPKSGIEAAGRQFRYHVFAKVMRENRATAVLTAHHANDQVETYLMKLARGGDISQLTGIATSRPFATGRLIRPLLTWSKDQLRNYAAEQHVVYFEDVTNQDVALTRNRIRHRVVPELMTVNPQLLKHVADYQQQLTTLLTAKKQMVTVLLSQVVTATGALVVDQWGALPSQWQLAVFATWLEQQTQQLFTESKLQPLVSWGQRTRPATSRLTVNAAWELYRNAGIIEALPIKKRGKKLMPREKIMVDLNQWQKITATQTVGIFTRVPNVVSQPFWLTEADWPLVWRPWQAGDRIVLKGGGHQLVRRLLIDRKVPAERREQVQVLVNAQGNVLWVVGHKFSYRTTGTQTVFLALKHES</sequence>
<feature type="chain" id="PRO_0000181709" description="tRNA(Ile)-lysidine synthase">
    <location>
        <begin position="1"/>
        <end position="448"/>
    </location>
</feature>
<feature type="binding site" evidence="1">
    <location>
        <begin position="28"/>
        <end position="33"/>
    </location>
    <ligand>
        <name>ATP</name>
        <dbReference type="ChEBI" id="CHEBI:30616"/>
    </ligand>
</feature>
<comment type="function">
    <text evidence="1">Ligates lysine onto the cytidine present at position 34 of the AUA codon-specific tRNA(Ile) that contains the anticodon CAU, in an ATP-dependent manner. Cytidine is converted to lysidine, thus changing the amino acid specificity of the tRNA from methionine to isoleucine.</text>
</comment>
<comment type="catalytic activity">
    <reaction evidence="1">
        <text>cytidine(34) in tRNA(Ile2) + L-lysine + ATP = lysidine(34) in tRNA(Ile2) + AMP + diphosphate + H(+)</text>
        <dbReference type="Rhea" id="RHEA:43744"/>
        <dbReference type="Rhea" id="RHEA-COMP:10625"/>
        <dbReference type="Rhea" id="RHEA-COMP:10670"/>
        <dbReference type="ChEBI" id="CHEBI:15378"/>
        <dbReference type="ChEBI" id="CHEBI:30616"/>
        <dbReference type="ChEBI" id="CHEBI:32551"/>
        <dbReference type="ChEBI" id="CHEBI:33019"/>
        <dbReference type="ChEBI" id="CHEBI:82748"/>
        <dbReference type="ChEBI" id="CHEBI:83665"/>
        <dbReference type="ChEBI" id="CHEBI:456215"/>
        <dbReference type="EC" id="6.3.4.19"/>
    </reaction>
</comment>
<comment type="subcellular location">
    <subcellularLocation>
        <location evidence="1">Cytoplasm</location>
    </subcellularLocation>
</comment>
<comment type="domain">
    <text>The N-terminal region contains the highly conserved SGGXDS motif, predicted to be a P-loop motif involved in ATP binding.</text>
</comment>
<comment type="similarity">
    <text evidence="1">Belongs to the tRNA(Ile)-lysidine synthase family.</text>
</comment>
<name>TILS_LACPL</name>
<keyword id="KW-0067">ATP-binding</keyword>
<keyword id="KW-0963">Cytoplasm</keyword>
<keyword id="KW-0436">Ligase</keyword>
<keyword id="KW-0547">Nucleotide-binding</keyword>
<keyword id="KW-1185">Reference proteome</keyword>
<keyword id="KW-0819">tRNA processing</keyword>
<evidence type="ECO:0000255" key="1">
    <source>
        <dbReference type="HAMAP-Rule" id="MF_01161"/>
    </source>
</evidence>
<protein>
    <recommendedName>
        <fullName evidence="1">tRNA(Ile)-lysidine synthase</fullName>
        <ecNumber evidence="1">6.3.4.19</ecNumber>
    </recommendedName>
    <alternativeName>
        <fullName evidence="1">tRNA(Ile)-2-lysyl-cytidine synthase</fullName>
    </alternativeName>
    <alternativeName>
        <fullName evidence="1">tRNA(Ile)-lysidine synthetase</fullName>
    </alternativeName>
</protein>
<accession>Q88Z33</accession>
<accession>F9UL18</accession>
<organism>
    <name type="scientific">Lactiplantibacillus plantarum (strain ATCC BAA-793 / NCIMB 8826 / WCFS1)</name>
    <name type="common">Lactobacillus plantarum</name>
    <dbReference type="NCBI Taxonomy" id="220668"/>
    <lineage>
        <taxon>Bacteria</taxon>
        <taxon>Bacillati</taxon>
        <taxon>Bacillota</taxon>
        <taxon>Bacilli</taxon>
        <taxon>Lactobacillales</taxon>
        <taxon>Lactobacillaceae</taxon>
        <taxon>Lactiplantibacillus</taxon>
    </lineage>
</organism>
<dbReference type="EC" id="6.3.4.19" evidence="1"/>
<dbReference type="EMBL" id="AL935263">
    <property type="protein sequence ID" value="CCC78033.1"/>
    <property type="molecule type" value="Genomic_DNA"/>
</dbReference>
<dbReference type="RefSeq" id="WP_003642085.1">
    <property type="nucleotide sequence ID" value="NC_004567.2"/>
</dbReference>
<dbReference type="RefSeq" id="YP_004888547.1">
    <property type="nucleotide sequence ID" value="NC_004567.2"/>
</dbReference>
<dbReference type="SMR" id="Q88Z33"/>
<dbReference type="STRING" id="220668.lp_0545"/>
<dbReference type="EnsemblBacteria" id="CCC78033">
    <property type="protein sequence ID" value="CCC78033"/>
    <property type="gene ID" value="lp_0545"/>
</dbReference>
<dbReference type="KEGG" id="lpl:lp_0545"/>
<dbReference type="PATRIC" id="fig|220668.9.peg.451"/>
<dbReference type="eggNOG" id="COG0037">
    <property type="taxonomic scope" value="Bacteria"/>
</dbReference>
<dbReference type="HOGENOM" id="CLU_018869_0_2_9"/>
<dbReference type="OrthoDB" id="9807403at2"/>
<dbReference type="PhylomeDB" id="Q88Z33"/>
<dbReference type="BRENDA" id="6.3.4.19">
    <property type="organism ID" value="2849"/>
</dbReference>
<dbReference type="Proteomes" id="UP000000432">
    <property type="component" value="Chromosome"/>
</dbReference>
<dbReference type="GO" id="GO:0005737">
    <property type="term" value="C:cytoplasm"/>
    <property type="evidence" value="ECO:0007669"/>
    <property type="project" value="UniProtKB-SubCell"/>
</dbReference>
<dbReference type="GO" id="GO:0005524">
    <property type="term" value="F:ATP binding"/>
    <property type="evidence" value="ECO:0007669"/>
    <property type="project" value="UniProtKB-KW"/>
</dbReference>
<dbReference type="GO" id="GO:0032267">
    <property type="term" value="F:tRNA(Ile)-lysidine synthase activity"/>
    <property type="evidence" value="ECO:0007669"/>
    <property type="project" value="UniProtKB-EC"/>
</dbReference>
<dbReference type="GO" id="GO:0006400">
    <property type="term" value="P:tRNA modification"/>
    <property type="evidence" value="ECO:0007669"/>
    <property type="project" value="UniProtKB-UniRule"/>
</dbReference>
<dbReference type="CDD" id="cd01992">
    <property type="entry name" value="TilS_N"/>
    <property type="match status" value="1"/>
</dbReference>
<dbReference type="Gene3D" id="3.40.50.620">
    <property type="entry name" value="HUPs"/>
    <property type="match status" value="1"/>
</dbReference>
<dbReference type="HAMAP" id="MF_01161">
    <property type="entry name" value="tRNA_Ile_lys_synt"/>
    <property type="match status" value="1"/>
</dbReference>
<dbReference type="InterPro" id="IPR012796">
    <property type="entry name" value="Lysidine-tRNA-synth_C"/>
</dbReference>
<dbReference type="InterPro" id="IPR014729">
    <property type="entry name" value="Rossmann-like_a/b/a_fold"/>
</dbReference>
<dbReference type="InterPro" id="IPR011063">
    <property type="entry name" value="TilS/TtcA_N"/>
</dbReference>
<dbReference type="InterPro" id="IPR012094">
    <property type="entry name" value="tRNA_Ile_lys_synt"/>
</dbReference>
<dbReference type="InterPro" id="IPR012795">
    <property type="entry name" value="tRNA_Ile_lys_synt_N"/>
</dbReference>
<dbReference type="NCBIfam" id="TIGR02433">
    <property type="entry name" value="lysidine_TilS_C"/>
    <property type="match status" value="1"/>
</dbReference>
<dbReference type="NCBIfam" id="TIGR02432">
    <property type="entry name" value="lysidine_TilS_N"/>
    <property type="match status" value="1"/>
</dbReference>
<dbReference type="PANTHER" id="PTHR43033">
    <property type="entry name" value="TRNA(ILE)-LYSIDINE SYNTHASE-RELATED"/>
    <property type="match status" value="1"/>
</dbReference>
<dbReference type="PANTHER" id="PTHR43033:SF1">
    <property type="entry name" value="TRNA(ILE)-LYSIDINE SYNTHASE-RELATED"/>
    <property type="match status" value="1"/>
</dbReference>
<dbReference type="Pfam" id="PF01171">
    <property type="entry name" value="ATP_bind_3"/>
    <property type="match status" value="1"/>
</dbReference>
<dbReference type="Pfam" id="PF11734">
    <property type="entry name" value="TilS_C"/>
    <property type="match status" value="1"/>
</dbReference>
<dbReference type="SMART" id="SM00977">
    <property type="entry name" value="TilS_C"/>
    <property type="match status" value="1"/>
</dbReference>
<dbReference type="SUPFAM" id="SSF52402">
    <property type="entry name" value="Adenine nucleotide alpha hydrolases-like"/>
    <property type="match status" value="1"/>
</dbReference>
<dbReference type="SUPFAM" id="SSF56037">
    <property type="entry name" value="PheT/TilS domain"/>
    <property type="match status" value="1"/>
</dbReference>